<proteinExistence type="evidence at protein level"/>
<name>RK32_SPIOL</name>
<comment type="function">
    <text evidence="7 8">Component of the chloroplast ribosome (chloro-ribosome), a dedicated translation machinery responsible for the synthesis of chloroplast genome-encoded proteins, including proteins of the transcription and translation machinery and components of the photosynthetic apparatus.</text>
</comment>
<comment type="subunit">
    <text evidence="1 3">Component of the chloroplast large ribosomal subunit (LSU). Mature 70S chloroplast ribosomes of higher plants consist of a small (30S) and a large (50S) subunit. The 30S small subunit contains 1 molecule of ribosomal RNA (16S rRNA) and 24 different proteins. The 50S large subunit contains 3 rRNA molecules (23S, 5S and 4.5S rRNA) and 33 different proteins.</text>
</comment>
<comment type="subcellular location">
    <subcellularLocation>
        <location evidence="1 3">Plastid</location>
        <location evidence="1 3">Chloroplast</location>
    </subcellularLocation>
</comment>
<comment type="mass spectrometry"/>
<comment type="similarity">
    <text evidence="6">Belongs to the bacterial ribosomal protein bL32 family.</text>
</comment>
<accession>P28804</accession>
<accession>Q9M3J3</accession>
<dbReference type="EMBL" id="AJ400848">
    <property type="protein sequence ID" value="CAB88781.1"/>
    <property type="molecule type" value="Genomic_DNA"/>
</dbReference>
<dbReference type="RefSeq" id="NP_054985.1">
    <property type="nucleotide sequence ID" value="NC_002202.1"/>
</dbReference>
<dbReference type="PDB" id="4V61">
    <property type="method" value="EM"/>
    <property type="resolution" value="9.40 A"/>
    <property type="chains" value="B2=1-57"/>
</dbReference>
<dbReference type="PDB" id="5H1S">
    <property type="method" value="EM"/>
    <property type="resolution" value="3.50 A"/>
    <property type="chains" value="b=2-57"/>
</dbReference>
<dbReference type="PDB" id="5MLC">
    <property type="method" value="EM"/>
    <property type="resolution" value="3.90 A"/>
    <property type="chains" value="2=1-57"/>
</dbReference>
<dbReference type="PDB" id="5MMI">
    <property type="method" value="EM"/>
    <property type="resolution" value="3.25 A"/>
    <property type="chains" value="1=1-57"/>
</dbReference>
<dbReference type="PDB" id="5MMM">
    <property type="method" value="EM"/>
    <property type="resolution" value="3.40 A"/>
    <property type="chains" value="1=1-57"/>
</dbReference>
<dbReference type="PDB" id="5X8P">
    <property type="method" value="EM"/>
    <property type="resolution" value="3.40 A"/>
    <property type="chains" value="1=2-57"/>
</dbReference>
<dbReference type="PDB" id="5X8T">
    <property type="method" value="EM"/>
    <property type="resolution" value="3.30 A"/>
    <property type="chains" value="1=2-57"/>
</dbReference>
<dbReference type="PDB" id="6ERI">
    <property type="method" value="EM"/>
    <property type="resolution" value="3.00 A"/>
    <property type="chains" value="Aa=2-49"/>
</dbReference>
<dbReference type="PDBsum" id="4V61"/>
<dbReference type="PDBsum" id="5H1S"/>
<dbReference type="PDBsum" id="5MLC"/>
<dbReference type="PDBsum" id="5MMI"/>
<dbReference type="PDBsum" id="5MMM"/>
<dbReference type="PDBsum" id="5X8P"/>
<dbReference type="PDBsum" id="5X8T"/>
<dbReference type="PDBsum" id="6ERI"/>
<dbReference type="EMDB" id="EMD-3525"/>
<dbReference type="EMDB" id="EMD-3531"/>
<dbReference type="EMDB" id="EMD-3533"/>
<dbReference type="EMDB" id="EMD-3941"/>
<dbReference type="EMDB" id="EMD-6709"/>
<dbReference type="EMDB" id="EMD-6711"/>
<dbReference type="EMDB" id="EMD-9572"/>
<dbReference type="SMR" id="P28804"/>
<dbReference type="FunCoup" id="P28804">
    <property type="interactions" value="265"/>
</dbReference>
<dbReference type="IntAct" id="P28804">
    <property type="interactions" value="1"/>
</dbReference>
<dbReference type="STRING" id="3562.P28804"/>
<dbReference type="GeneID" id="2715628"/>
<dbReference type="KEGG" id="soe:2715628"/>
<dbReference type="InParanoid" id="P28804"/>
<dbReference type="Proteomes" id="UP001155700">
    <property type="component" value="Chloroplast Pltd"/>
</dbReference>
<dbReference type="GO" id="GO:0009507">
    <property type="term" value="C:chloroplast"/>
    <property type="evidence" value="ECO:0007669"/>
    <property type="project" value="UniProtKB-SubCell"/>
</dbReference>
<dbReference type="GO" id="GO:0015934">
    <property type="term" value="C:large ribosomal subunit"/>
    <property type="evidence" value="ECO:0007669"/>
    <property type="project" value="InterPro"/>
</dbReference>
<dbReference type="GO" id="GO:0003735">
    <property type="term" value="F:structural constituent of ribosome"/>
    <property type="evidence" value="ECO:0007669"/>
    <property type="project" value="InterPro"/>
</dbReference>
<dbReference type="GO" id="GO:0006412">
    <property type="term" value="P:translation"/>
    <property type="evidence" value="ECO:0007669"/>
    <property type="project" value="UniProtKB-UniRule"/>
</dbReference>
<dbReference type="HAMAP" id="MF_00340">
    <property type="entry name" value="Ribosomal_bL32"/>
    <property type="match status" value="1"/>
</dbReference>
<dbReference type="InterPro" id="IPR002677">
    <property type="entry name" value="Ribosomal_bL32"/>
</dbReference>
<dbReference type="InterPro" id="IPR044958">
    <property type="entry name" value="Ribosomal_bL32_plant/cyanobact"/>
</dbReference>
<dbReference type="InterPro" id="IPR011332">
    <property type="entry name" value="Ribosomal_zn-bd"/>
</dbReference>
<dbReference type="PANTHER" id="PTHR36083">
    <property type="entry name" value="50S RIBOSOMAL PROTEIN L32, CHLOROPLASTIC"/>
    <property type="match status" value="1"/>
</dbReference>
<dbReference type="PANTHER" id="PTHR36083:SF1">
    <property type="entry name" value="LARGE RIBOSOMAL SUBUNIT PROTEIN BL32C"/>
    <property type="match status" value="1"/>
</dbReference>
<dbReference type="SUPFAM" id="SSF57829">
    <property type="entry name" value="Zn-binding ribosomal proteins"/>
    <property type="match status" value="1"/>
</dbReference>
<keyword id="KW-0002">3D-structure</keyword>
<keyword id="KW-0150">Chloroplast</keyword>
<keyword id="KW-0903">Direct protein sequencing</keyword>
<keyword id="KW-0934">Plastid</keyword>
<keyword id="KW-1185">Reference proteome</keyword>
<keyword id="KW-0687">Ribonucleoprotein</keyword>
<keyword id="KW-0689">Ribosomal protein</keyword>
<geneLocation type="chloroplast"/>
<organism>
    <name type="scientific">Spinacia oleracea</name>
    <name type="common">Spinach</name>
    <dbReference type="NCBI Taxonomy" id="3562"/>
    <lineage>
        <taxon>Eukaryota</taxon>
        <taxon>Viridiplantae</taxon>
        <taxon>Streptophyta</taxon>
        <taxon>Embryophyta</taxon>
        <taxon>Tracheophyta</taxon>
        <taxon>Spermatophyta</taxon>
        <taxon>Magnoliopsida</taxon>
        <taxon>eudicotyledons</taxon>
        <taxon>Gunneridae</taxon>
        <taxon>Pentapetalae</taxon>
        <taxon>Caryophyllales</taxon>
        <taxon>Chenopodiaceae</taxon>
        <taxon>Chenopodioideae</taxon>
        <taxon>Anserineae</taxon>
        <taxon>Spinacia</taxon>
    </lineage>
</organism>
<evidence type="ECO:0000269" key="1">
    <source>
    </source>
</evidence>
<evidence type="ECO:0000269" key="2">
    <source>
    </source>
</evidence>
<evidence type="ECO:0000269" key="3">
    <source>
    </source>
</evidence>
<evidence type="ECO:0000303" key="4">
    <source>
    </source>
</evidence>
<evidence type="ECO:0000303" key="5">
    <source>
    </source>
</evidence>
<evidence type="ECO:0000305" key="6"/>
<evidence type="ECO:0000305" key="7">
    <source>
    </source>
</evidence>
<evidence type="ECO:0000305" key="8">
    <source>
    </source>
</evidence>
<evidence type="ECO:0007829" key="9">
    <source>
        <dbReference type="PDB" id="5MMI"/>
    </source>
</evidence>
<evidence type="ECO:0007829" key="10">
    <source>
        <dbReference type="PDB" id="5X8T"/>
    </source>
</evidence>
<feature type="initiator methionine" description="Removed" evidence="1 2">
    <location>
        <position position="1"/>
    </location>
</feature>
<feature type="chain" id="PRO_0000172480" description="Large ribosomal subunit protein bL32c">
    <location>
        <begin position="2"/>
        <end position="57"/>
    </location>
</feature>
<feature type="sequence conflict" description="In Ref. 2; AA sequence." evidence="6" ref="2">
    <original>W</original>
    <variation>S</variation>
    <location>
        <position position="26"/>
    </location>
</feature>
<feature type="helix" evidence="9">
    <location>
        <begin position="10"/>
        <end position="38"/>
    </location>
</feature>
<feature type="strand" evidence="10">
    <location>
        <begin position="39"/>
        <end position="41"/>
    </location>
</feature>
<feature type="strand" evidence="9">
    <location>
        <begin position="44"/>
        <end position="47"/>
    </location>
</feature>
<sequence>MAVPKKRTSIYKKRIRKNIWKKKGYWAALKAFSLAKSLSTGNSKSFFVRKISNQTLE</sequence>
<reference key="1">
    <citation type="journal article" date="2001" name="Plant Mol. Biol.">
        <title>The plastid chromosome of spinach (Spinacia oleracea): complete nucleotide sequence and gene organization.</title>
        <authorList>
            <person name="Schmitz-Linneweber C."/>
            <person name="Maier R.M."/>
            <person name="Alcaraz J.-P."/>
            <person name="Cottet A."/>
            <person name="Herrmann R.G."/>
            <person name="Mache R."/>
        </authorList>
    </citation>
    <scope>NUCLEOTIDE SEQUENCE [LARGE SCALE GENOMIC DNA]</scope>
    <source>
        <strain>cv. Geant d'hiver</strain>
        <strain>cv. Monatol</strain>
    </source>
</reference>
<reference key="2">
    <citation type="journal article" date="1992" name="Plant Mol. Biol.">
        <title>Purification and characterization of seven chloroplast ribosomal proteins: evidence that organelle ribosomal protein genes are functional and that NH2-terminal processing occurs via multiple pathways in chloroplasts.</title>
        <authorList>
            <person name="Schmidt J."/>
            <person name="Herfurth E."/>
            <person name="Subramanian A.R."/>
        </authorList>
    </citation>
    <scope>PROTEIN SEQUENCE OF 2-30</scope>
    <source>
        <strain>cv. Alwaro</strain>
    </source>
</reference>
<reference key="3">
    <citation type="journal article" date="2000" name="J. Biol. Chem.">
        <title>The plastid ribosomal proteins. Identification of all the proteins in the 50S subunit of an organelle ribosome (chloroplast).</title>
        <authorList>
            <person name="Yamaguchi K."/>
            <person name="Subramanian A.R."/>
        </authorList>
    </citation>
    <scope>PROTEIN SEQUENCE OF 2-7</scope>
    <scope>SUBUNIT</scope>
    <scope>SUBCELLULAR LOCATION</scope>
    <scope>MASS SPECTROMETRY</scope>
    <source>
        <strain>cv. Alwaro</strain>
        <tissue>Leaf</tissue>
    </source>
</reference>
<reference key="4">
    <citation type="journal article" date="2007" name="Proc. Natl. Acad. Sci. U.S.A.">
        <title>Cryo-EM study of the spinach chloroplast ribosome reveals the structural and functional roles of plastid-specific ribosomal proteins.</title>
        <authorList>
            <person name="Sharma M.R."/>
            <person name="Wilson D.N."/>
            <person name="Datta P.P."/>
            <person name="Barat C."/>
            <person name="Schluenzen F."/>
            <person name="Fucini P."/>
            <person name="Agrawal R.K."/>
        </authorList>
    </citation>
    <scope>STRUCTURE BY ELECTRON MICROSCOPY (9.4 ANGSTROMS)</scope>
</reference>
<reference key="5">
    <citation type="journal article" date="2016" name="Sci. Rep.">
        <title>Cryo-EM structure of the large subunit of the spinach chloroplast ribosome.</title>
        <authorList>
            <person name="Ahmed T."/>
            <person name="Yin Z."/>
            <person name="Bhushan S."/>
        </authorList>
    </citation>
    <scope>STRUCTURE BY ELECTRON MICROSCOPY (3.50 ANGSTROMS)</scope>
</reference>
<reference key="6">
    <citation type="journal article" date="2017" name="EMBO J.">
        <title>The complete structure of the chloroplast 70S ribosome in complex with translation factor pY.</title>
        <authorList>
            <person name="Bieri P."/>
            <person name="Leibundgut M."/>
            <person name="Saurer M."/>
            <person name="Boehringer D."/>
            <person name="Ban N."/>
        </authorList>
    </citation>
    <scope>STRUCTURE BY ELECTRON MICROSCOPY (3.25 ANGSTROMS)</scope>
    <scope>SUBUNIT</scope>
    <scope>SUBCELLULAR LOCATION</scope>
</reference>
<protein>
    <recommendedName>
        <fullName evidence="5">Large ribosomal subunit protein bL32c</fullName>
    </recommendedName>
    <alternativeName>
        <fullName evidence="4">50S ribosomal protein L32, chloroplastic</fullName>
    </alternativeName>
</protein>
<gene>
    <name type="primary">rpl32</name>
</gene>